<accession>P06717</accession>
<accession>P01554</accession>
<organism>
    <name type="scientific">Escherichia coli</name>
    <dbReference type="NCBI Taxonomy" id="562"/>
    <lineage>
        <taxon>Bacteria</taxon>
        <taxon>Pseudomonadati</taxon>
        <taxon>Pseudomonadota</taxon>
        <taxon>Gammaproteobacteria</taxon>
        <taxon>Enterobacterales</taxon>
        <taxon>Enterobacteriaceae</taxon>
        <taxon>Escherichia</taxon>
    </lineage>
</organism>
<name>ELAP_ECOLX</name>
<comment type="function">
    <text>The biological activity of the toxin is produced by the A chain, which activates intracellular adenyl cyclase.</text>
</comment>
<comment type="subunit">
    <text>Heterohexamer of one A chain and of five B chains.</text>
</comment>
<comment type="similarity">
    <text evidence="2">Belongs to the enterotoxin A family.</text>
</comment>
<evidence type="ECO:0000269" key="1">
    <source>
    </source>
</evidence>
<evidence type="ECO:0000305" key="2"/>
<evidence type="ECO:0007829" key="3">
    <source>
        <dbReference type="PDB" id="1LT3"/>
    </source>
</evidence>
<evidence type="ECO:0007829" key="4">
    <source>
        <dbReference type="PDB" id="1LTA"/>
    </source>
</evidence>
<evidence type="ECO:0007829" key="5">
    <source>
        <dbReference type="PDB" id="1LTI"/>
    </source>
</evidence>
<evidence type="ECO:0007829" key="6">
    <source>
        <dbReference type="PDB" id="1LTS"/>
    </source>
</evidence>
<gene>
    <name type="primary">eltA</name>
    <name type="synonym">ltpA</name>
</gene>
<sequence>MKNITFIFFILLASPLYANGDRLYRADSRPPDEIKRSGGLMPRGHNEYFDRGTQMNINLYDHARGTQTGFVRYDDGYVSTSLSLRSAHLAGQSILSGYSTYYIYVIATAPNMFNVNDVLGVYSPHPYEQEVSALGGIPYSQIYGWYRVNFGVIDERLHRNREYRDRYYRNLNIAPAEDGYRLAGFPPDHQAWREEPWIHHAPQGCGNSSRTITGDTCNEETQNLSTIYLREYQSKVKRQIFSDYQSEVDIYNRIRDEL</sequence>
<protein>
    <recommendedName>
        <fullName>Heat-labile enterotoxin A chain</fullName>
    </recommendedName>
    <alternativeName>
        <fullName>LT-A, porcine</fullName>
    </alternativeName>
    <alternativeName>
        <fullName>LTP-A</fullName>
    </alternativeName>
</protein>
<proteinExistence type="evidence at protein level"/>
<dbReference type="EMBL" id="M15361">
    <property type="protein sequence ID" value="AAA24791.1"/>
    <property type="molecule type" value="Genomic_DNA"/>
</dbReference>
<dbReference type="EMBL" id="M15362">
    <property type="protein sequence ID" value="AAA24793.1"/>
    <property type="molecule type" value="Genomic_DNA"/>
</dbReference>
<dbReference type="EMBL" id="M35581">
    <property type="protein sequence ID" value="AAA98202.1"/>
    <property type="molecule type" value="Genomic_DNA"/>
</dbReference>
<dbReference type="EMBL" id="V00275">
    <property type="protein sequence ID" value="CAA23532.1"/>
    <property type="molecule type" value="Genomic_DNA"/>
</dbReference>
<dbReference type="EMBL" id="M57244">
    <property type="protein sequence ID" value="AAB59161.1"/>
    <property type="molecule type" value="Genomic_DNA"/>
</dbReference>
<dbReference type="EMBL" id="M61015">
    <property type="protein sequence ID" value="AAA24335.1"/>
    <property type="molecule type" value="Genomic_DNA"/>
</dbReference>
<dbReference type="PIR" id="I55231">
    <property type="entry name" value="QLECA"/>
</dbReference>
<dbReference type="RefSeq" id="WP_042634421.1">
    <property type="nucleotide sequence ID" value="NZ_BKCC01000270.1"/>
</dbReference>
<dbReference type="PDB" id="1HTL">
    <property type="method" value="X-ray"/>
    <property type="resolution" value="2.50 A"/>
    <property type="chains" value="A=19-209, C=210-258"/>
</dbReference>
<dbReference type="PDB" id="1LT3">
    <property type="method" value="X-ray"/>
    <property type="resolution" value="2.00 A"/>
    <property type="chains" value="A=19-258"/>
</dbReference>
<dbReference type="PDB" id="1LT4">
    <property type="method" value="X-ray"/>
    <property type="resolution" value="2.00 A"/>
    <property type="chains" value="A=19-251"/>
</dbReference>
<dbReference type="PDB" id="1LTA">
    <property type="method" value="X-ray"/>
    <property type="resolution" value="2.20 A"/>
    <property type="chains" value="A=19-206, C=210-258"/>
</dbReference>
<dbReference type="PDB" id="1LTB">
    <property type="method" value="X-ray"/>
    <property type="resolution" value="2.60 A"/>
    <property type="chains" value="A=22-206, C=210-254"/>
</dbReference>
<dbReference type="PDB" id="1LTG">
    <property type="method" value="X-ray"/>
    <property type="resolution" value="2.40 A"/>
    <property type="chains" value="A=19-209, C=210-258"/>
</dbReference>
<dbReference type="PDB" id="1LTI">
    <property type="method" value="X-ray"/>
    <property type="resolution" value="2.13 A"/>
    <property type="chains" value="A=19-210, C=211-258"/>
</dbReference>
<dbReference type="PDB" id="1LTS">
    <property type="method" value="X-ray"/>
    <property type="resolution" value="1.95 A"/>
    <property type="chains" value="A=22-206, C=214-254"/>
</dbReference>
<dbReference type="PDB" id="1LTT">
    <property type="method" value="X-ray"/>
    <property type="resolution" value="2.30 A"/>
    <property type="chains" value="A=22-206, C=214-254"/>
</dbReference>
<dbReference type="PDBsum" id="1HTL"/>
<dbReference type="PDBsum" id="1LT3"/>
<dbReference type="PDBsum" id="1LT4"/>
<dbReference type="PDBsum" id="1LTA"/>
<dbReference type="PDBsum" id="1LTB"/>
<dbReference type="PDBsum" id="1LTG"/>
<dbReference type="PDBsum" id="1LTI"/>
<dbReference type="PDBsum" id="1LTS"/>
<dbReference type="PDBsum" id="1LTT"/>
<dbReference type="SMR" id="P06717"/>
<dbReference type="IntAct" id="P06717">
    <property type="interactions" value="1"/>
</dbReference>
<dbReference type="EvolutionaryTrace" id="P06717"/>
<dbReference type="GO" id="GO:0005615">
    <property type="term" value="C:extracellular space"/>
    <property type="evidence" value="ECO:0007669"/>
    <property type="project" value="InterPro"/>
</dbReference>
<dbReference type="GO" id="GO:0090729">
    <property type="term" value="F:toxin activity"/>
    <property type="evidence" value="ECO:0007669"/>
    <property type="project" value="UniProtKB-KW"/>
</dbReference>
<dbReference type="Gene3D" id="1.20.5.240">
    <property type="match status" value="1"/>
</dbReference>
<dbReference type="Gene3D" id="3.90.210.10">
    <property type="entry name" value="Heat-Labile Enterotoxin, subunit A"/>
    <property type="match status" value="1"/>
</dbReference>
<dbReference type="InterPro" id="IPR001144">
    <property type="entry name" value="Enterotoxin_A"/>
</dbReference>
<dbReference type="Pfam" id="PF01375">
    <property type="entry name" value="Enterotoxin_a"/>
    <property type="match status" value="1"/>
</dbReference>
<dbReference type="PRINTS" id="PR00771">
    <property type="entry name" value="ENTEROTOXINA"/>
</dbReference>
<dbReference type="SUPFAM" id="SSF56399">
    <property type="entry name" value="ADP-ribosylation"/>
    <property type="match status" value="1"/>
</dbReference>
<reference key="1">
    <citation type="journal article" date="1987" name="J. Bacteriol.">
        <title>Evolutionary origin of pathogenic determinants in enterotoxigenic Escherichia coli and Vibrio cholerae O1.</title>
        <authorList>
            <person name="Yamamoto T."/>
            <person name="Gojobori T."/>
            <person name="Yokota T."/>
        </authorList>
    </citation>
    <scope>NUCLEOTIDE SEQUENCE [GENOMIC DNA]</scope>
    <source>
        <strain>Isolate P307 / ETEC</strain>
        <strain>Isolate PCG86 / ETEC</strain>
    </source>
</reference>
<reference key="2">
    <citation type="journal article" date="1985" name="FEMS Microbiol. Lett.">
        <title>A comparison of the nucleotide sequence of the A subunit of heat-labile enterotoxin and cholera toxin.</title>
        <authorList>
            <person name="Dykes C.W."/>
            <person name="Halliday I.J."/>
            <person name="Hobden A.N."/>
            <person name="Read M.J."/>
            <person name="Harford S."/>
        </authorList>
    </citation>
    <scope>NUCLEOTIDE SEQUENCE [GENOMIC DNA]</scope>
    <source>
        <strain>Isolate P307 / ETEC</strain>
    </source>
</reference>
<reference key="3">
    <citation type="journal article" date="1982" name="J. Biol. Chem.">
        <title>Escherichia coli heat-labile enterotoxin. Nucleotide sequence of the A subunit gene.</title>
        <authorList>
            <person name="Spicer E.K."/>
            <person name="Noble J.A."/>
        </authorList>
    </citation>
    <scope>NUCLEOTIDE SEQUENCE [GENOMIC DNA]</scope>
    <source>
        <strain>Isolate P307 / ETEC</strain>
    </source>
</reference>
<reference key="4">
    <citation type="journal article" date="1990" name="J. Biol. Chem.">
        <title>A single amino acid substitution in the A subunit of Escherichia coli enterotoxin results in a loss of its toxic activity.</title>
        <authorList>
            <person name="Tsuji T."/>
            <person name="Inoue T."/>
            <person name="Miyama A."/>
            <person name="Okamoto K."/>
            <person name="Honda T."/>
            <person name="Miwatani T."/>
        </authorList>
    </citation>
    <scope>NUCLEOTIDE SEQUENCE [GENOMIC DNA] OF 19-258</scope>
    <source>
        <strain>Isolate P307 / ETEC</strain>
    </source>
</reference>
<reference key="5">
    <citation type="submission" date="1991-07" db="EMBL/GenBank/DDBJ databases">
        <authorList>
            <person name="Trachman J.D."/>
            <person name="Maas W.K."/>
        </authorList>
    </citation>
    <scope>NUCLEOTIDE SEQUENCE [GENOMIC DNA] OF 1-40</scope>
</reference>
<reference key="6">
    <citation type="journal article" date="1991" name="Nature">
        <title>Crystal structure of a cholera toxin-related heat-labile enterotoxin from E. coli.</title>
        <authorList>
            <person name="Sixma T.K."/>
            <person name="Pronk S.E."/>
            <person name="Kalk K.H."/>
            <person name="Wartna E.S."/>
            <person name="van Zanten B.A.M."/>
            <person name="Witholt B."/>
            <person name="Hol W.G.J."/>
        </authorList>
    </citation>
    <scope>X-RAY CRYSTALLOGRAPHY (2.3 ANGSTROMS)</scope>
</reference>
<reference key="7">
    <citation type="journal article" date="1993" name="J. Mol. Biol.">
        <title>Refined structure of Escherichia coli heat-labile enterotoxin, a close relative of cholera toxin.</title>
        <authorList>
            <person name="Sixma T.K."/>
            <person name="van Zanten B.A.M."/>
            <person name="Dauter Z."/>
            <person name="Hol W.G.J."/>
        </authorList>
    </citation>
    <scope>X-RAY CRYSTALLOGRAPHY (1.95 ANGSTROMS)</scope>
</reference>
<reference key="8">
    <citation type="journal article" date="1994" name="Mol. Microbiol.">
        <title>Probing the structure-activity relationship of Escherichia coli LT-A by site-directed mutagenesis.</title>
        <authorList>
            <person name="Pizza M."/>
            <person name="Domenighini M."/>
            <person name="Hol W.G.J."/>
            <person name="Giannelli V."/>
            <person name="Fontana M.R."/>
            <person name="Giuliani M.M."/>
            <person name="Magagnoli C."/>
            <person name="Peppoloni S."/>
            <person name="Manetti R."/>
            <person name="Rappuoli R."/>
        </authorList>
    </citation>
    <scope>X-RAY CRYSTALLOGRAPHY (2.4 ANGSTROMS) OF 19-258</scope>
    <scope>MUTAGENESIS OF ARG-25; VAL-71; ARG-72; TYR-77; SER-81; ALA-90; VAL-115; TYR-122; HIS-125; GLU-128; GLU-130; SER-132 AND ARG-210</scope>
</reference>
<reference key="9">
    <citation type="journal article" date="1995" name="Mol. Microbiol.">
        <title>Identification of errors among database sequence entries and comparison of correct amino acid sequences for the heat-labile enterotoxins of Escherichia coli and Vibrio cholerae.</title>
        <authorList>
            <person name="Domenighini M."/>
            <person name="Pizza M."/>
            <person name="Jobling M.G."/>
            <person name="Holmes R.K."/>
            <person name="Rappuoli R."/>
        </authorList>
    </citation>
    <scope>DISCUSSION OF SEQUENCE</scope>
</reference>
<keyword id="KW-0002">3D-structure</keyword>
<keyword id="KW-1015">Disulfide bond</keyword>
<keyword id="KW-0260">Enterotoxin</keyword>
<keyword id="KW-0732">Signal</keyword>
<keyword id="KW-0800">Toxin</keyword>
<keyword id="KW-0843">Virulence</keyword>
<feature type="signal peptide">
    <location>
        <begin position="1"/>
        <end position="18"/>
    </location>
</feature>
<feature type="chain" id="PRO_0000019351" description="Heat-labile enterotoxin A chain">
    <location>
        <begin position="19"/>
        <end position="258"/>
    </location>
</feature>
<feature type="active site">
    <location>
        <position position="130"/>
    </location>
</feature>
<feature type="binding site">
    <location>
        <begin position="25"/>
        <end position="39"/>
    </location>
    <ligand>
        <name>NAD(+)</name>
        <dbReference type="ChEBI" id="CHEBI:57540"/>
    </ligand>
</feature>
<feature type="disulfide bond">
    <location>
        <begin position="205"/>
        <end position="217"/>
    </location>
</feature>
<feature type="sequence variant" description="In inactive mutant.">
    <original>E</original>
    <variation>K</variation>
    <location>
        <position position="130"/>
    </location>
</feature>
<feature type="mutagenesis site" description="Abolishes toxicity." evidence="1">
    <original>R</original>
    <variation>K</variation>
    <location>
        <position position="25"/>
    </location>
</feature>
<feature type="mutagenesis site" description="Abolishes toxicity." evidence="1">
    <original>V</original>
    <variation>D</variation>
    <variation>E</variation>
    <location>
        <position position="71"/>
    </location>
</feature>
<feature type="mutagenesis site" description="No effect." evidence="1">
    <original>R</original>
    <variation>A</variation>
    <variation>K</variation>
    <location>
        <position position="72"/>
    </location>
</feature>
<feature type="mutagenesis site" description="No effect." evidence="1">
    <original>Y</original>
    <variation>M</variation>
    <location>
        <position position="77"/>
    </location>
</feature>
<feature type="mutagenesis site" description="Abolishes toxicity." evidence="1">
    <original>S</original>
    <variation>K</variation>
    <location>
        <position position="81"/>
    </location>
</feature>
<feature type="mutagenesis site" description="No effect." evidence="1">
    <original>A</original>
    <variation>E</variation>
    <variation>H</variation>
    <variation>R</variation>
    <location>
        <position position="90"/>
    </location>
</feature>
<feature type="mutagenesis site" description="Abolishes toxicity." evidence="1">
    <original>V</original>
    <variation>K</variation>
    <location>
        <position position="115"/>
    </location>
</feature>
<feature type="mutagenesis site" description="Abolishes toxicity." evidence="1">
    <original>Y</original>
    <variation>D</variation>
    <variation>K</variation>
    <location>
        <position position="122"/>
    </location>
</feature>
<feature type="mutagenesis site" description="Strongly reduces toxicity." evidence="1">
    <original>H</original>
    <variation>E</variation>
    <location>
        <position position="125"/>
    </location>
</feature>
<feature type="mutagenesis site" description="Abolishes toxicity." evidence="1">
    <original>E</original>
    <variation>S</variation>
    <location>
        <position position="128"/>
    </location>
</feature>
<feature type="mutagenesis site" description="Abolishes toxicity." evidence="1">
    <original>E</original>
    <variation>S</variation>
    <location>
        <position position="130"/>
    </location>
</feature>
<feature type="mutagenesis site" description="Abolishes toxicity." evidence="1">
    <original>S</original>
    <variation>E</variation>
    <variation>K</variation>
    <location>
        <position position="132"/>
    </location>
</feature>
<feature type="mutagenesis site" description="No effect." evidence="1">
    <original>R</original>
    <variation>N</variation>
    <location>
        <position position="210"/>
    </location>
</feature>
<feature type="sequence conflict" description="In Ref. 3; CAA23532." evidence="2" ref="3">
    <original>SGG</original>
    <variation>FRS</variation>
    <location>
        <begin position="37"/>
        <end position="39"/>
    </location>
</feature>
<feature type="sequence conflict" description="In Ref. 3; CAA23532." evidence="2" ref="3">
    <location>
        <position position="45"/>
    </location>
</feature>
<feature type="sequence conflict" description="In Ref. 3; CAA23532." evidence="2" ref="3">
    <original>S</original>
    <variation>Y</variation>
    <location>
        <position position="93"/>
    </location>
</feature>
<feature type="sequence conflict" description="In Ref. 3; CAA23532." evidence="2" ref="3">
    <original>TYYIYVIATAP</original>
    <variation>LTIYIVIA</variation>
    <location>
        <begin position="100"/>
        <end position="110"/>
    </location>
</feature>
<feature type="sequence conflict" description="In Ref. 3; CAA23532." evidence="2" ref="3">
    <original>LG</original>
    <variation>IS</variation>
    <location>
        <begin position="119"/>
        <end position="120"/>
    </location>
</feature>
<feature type="sequence conflict" description="In Ref. 4; AAB59161." evidence="2" ref="4">
    <original>R</original>
    <variation>G</variation>
    <location>
        <position position="159"/>
    </location>
</feature>
<feature type="sequence conflict" description="In Ref. 3; CAA23532." evidence="2" ref="3">
    <original>N</original>
    <variation>D</variation>
    <location>
        <position position="207"/>
    </location>
</feature>
<feature type="strand" evidence="6">
    <location>
        <begin position="23"/>
        <end position="29"/>
    </location>
</feature>
<feature type="helix" evidence="6">
    <location>
        <begin position="31"/>
        <end position="37"/>
    </location>
</feature>
<feature type="strand" evidence="5">
    <location>
        <begin position="47"/>
        <end position="49"/>
    </location>
</feature>
<feature type="strand" evidence="4">
    <location>
        <begin position="51"/>
        <end position="53"/>
    </location>
</feature>
<feature type="helix" evidence="6">
    <location>
        <begin position="59"/>
        <end position="64"/>
    </location>
</feature>
<feature type="strand" evidence="6">
    <location>
        <begin position="70"/>
        <end position="72"/>
    </location>
</feature>
<feature type="strand" evidence="6">
    <location>
        <begin position="77"/>
        <end position="83"/>
    </location>
</feature>
<feature type="helix" evidence="6">
    <location>
        <begin position="84"/>
        <end position="94"/>
    </location>
</feature>
<feature type="helix" evidence="5">
    <location>
        <begin position="95"/>
        <end position="97"/>
    </location>
</feature>
<feature type="strand" evidence="6">
    <location>
        <begin position="99"/>
        <end position="106"/>
    </location>
</feature>
<feature type="strand" evidence="6">
    <location>
        <begin position="112"/>
        <end position="114"/>
    </location>
</feature>
<feature type="helix" evidence="6">
    <location>
        <begin position="115"/>
        <end position="119"/>
    </location>
</feature>
<feature type="helix" evidence="6">
    <location>
        <begin position="120"/>
        <end position="122"/>
    </location>
</feature>
<feature type="helix" evidence="6">
    <location>
        <begin position="126"/>
        <end position="128"/>
    </location>
</feature>
<feature type="strand" evidence="6">
    <location>
        <begin position="130"/>
        <end position="134"/>
    </location>
</feature>
<feature type="helix" evidence="6">
    <location>
        <begin position="139"/>
        <end position="141"/>
    </location>
</feature>
<feature type="strand" evidence="6">
    <location>
        <begin position="142"/>
        <end position="149"/>
    </location>
</feature>
<feature type="strand" evidence="3">
    <location>
        <begin position="152"/>
        <end position="159"/>
    </location>
</feature>
<feature type="helix" evidence="6">
    <location>
        <begin position="165"/>
        <end position="170"/>
    </location>
</feature>
<feature type="helix" evidence="6">
    <location>
        <begin position="176"/>
        <end position="179"/>
    </location>
</feature>
<feature type="helix" evidence="6">
    <location>
        <begin position="180"/>
        <end position="182"/>
    </location>
</feature>
<feature type="helix" evidence="6">
    <location>
        <begin position="190"/>
        <end position="193"/>
    </location>
</feature>
<feature type="helix" evidence="6">
    <location>
        <begin position="197"/>
        <end position="200"/>
    </location>
</feature>
<feature type="helix" evidence="6">
    <location>
        <begin position="215"/>
        <end position="240"/>
    </location>
</feature>
<feature type="helix" evidence="6">
    <location>
        <begin position="241"/>
        <end position="244"/>
    </location>
</feature>
<feature type="helix" evidence="6">
    <location>
        <begin position="250"/>
        <end position="253"/>
    </location>
</feature>